<name>RPOA_SHEPC</name>
<reference key="1">
    <citation type="submission" date="2007-04" db="EMBL/GenBank/DDBJ databases">
        <title>Complete sequence of Shewanella putrefaciens CN-32.</title>
        <authorList>
            <consortium name="US DOE Joint Genome Institute"/>
            <person name="Copeland A."/>
            <person name="Lucas S."/>
            <person name="Lapidus A."/>
            <person name="Barry K."/>
            <person name="Detter J.C."/>
            <person name="Glavina del Rio T."/>
            <person name="Hammon N."/>
            <person name="Israni S."/>
            <person name="Dalin E."/>
            <person name="Tice H."/>
            <person name="Pitluck S."/>
            <person name="Chain P."/>
            <person name="Malfatti S."/>
            <person name="Shin M."/>
            <person name="Vergez L."/>
            <person name="Schmutz J."/>
            <person name="Larimer F."/>
            <person name="Land M."/>
            <person name="Hauser L."/>
            <person name="Kyrpides N."/>
            <person name="Mikhailova N."/>
            <person name="Romine M.F."/>
            <person name="Fredrickson J."/>
            <person name="Tiedje J."/>
            <person name="Richardson P."/>
        </authorList>
    </citation>
    <scope>NUCLEOTIDE SEQUENCE [LARGE SCALE GENOMIC DNA]</scope>
    <source>
        <strain>CN-32 / ATCC BAA-453</strain>
    </source>
</reference>
<dbReference type="EC" id="2.7.7.6" evidence="1"/>
<dbReference type="EMBL" id="CP000681">
    <property type="protein sequence ID" value="ABP77441.1"/>
    <property type="molecule type" value="Genomic_DNA"/>
</dbReference>
<dbReference type="SMR" id="A4YBV8"/>
<dbReference type="STRING" id="319224.Sputcn32_3734"/>
<dbReference type="KEGG" id="spc:Sputcn32_3734"/>
<dbReference type="eggNOG" id="COG0202">
    <property type="taxonomic scope" value="Bacteria"/>
</dbReference>
<dbReference type="HOGENOM" id="CLU_053084_0_0_6"/>
<dbReference type="GO" id="GO:0005737">
    <property type="term" value="C:cytoplasm"/>
    <property type="evidence" value="ECO:0007669"/>
    <property type="project" value="UniProtKB-ARBA"/>
</dbReference>
<dbReference type="GO" id="GO:0000428">
    <property type="term" value="C:DNA-directed RNA polymerase complex"/>
    <property type="evidence" value="ECO:0007669"/>
    <property type="project" value="UniProtKB-KW"/>
</dbReference>
<dbReference type="GO" id="GO:0003677">
    <property type="term" value="F:DNA binding"/>
    <property type="evidence" value="ECO:0007669"/>
    <property type="project" value="UniProtKB-UniRule"/>
</dbReference>
<dbReference type="GO" id="GO:0003899">
    <property type="term" value="F:DNA-directed RNA polymerase activity"/>
    <property type="evidence" value="ECO:0007669"/>
    <property type="project" value="UniProtKB-UniRule"/>
</dbReference>
<dbReference type="GO" id="GO:0046983">
    <property type="term" value="F:protein dimerization activity"/>
    <property type="evidence" value="ECO:0007669"/>
    <property type="project" value="InterPro"/>
</dbReference>
<dbReference type="GO" id="GO:0006351">
    <property type="term" value="P:DNA-templated transcription"/>
    <property type="evidence" value="ECO:0007669"/>
    <property type="project" value="UniProtKB-UniRule"/>
</dbReference>
<dbReference type="CDD" id="cd06928">
    <property type="entry name" value="RNAP_alpha_NTD"/>
    <property type="match status" value="1"/>
</dbReference>
<dbReference type="FunFam" id="1.10.150.20:FF:000001">
    <property type="entry name" value="DNA-directed RNA polymerase subunit alpha"/>
    <property type="match status" value="1"/>
</dbReference>
<dbReference type="FunFam" id="2.170.120.12:FF:000001">
    <property type="entry name" value="DNA-directed RNA polymerase subunit alpha"/>
    <property type="match status" value="1"/>
</dbReference>
<dbReference type="Gene3D" id="1.10.150.20">
    <property type="entry name" value="5' to 3' exonuclease, C-terminal subdomain"/>
    <property type="match status" value="1"/>
</dbReference>
<dbReference type="Gene3D" id="2.170.120.12">
    <property type="entry name" value="DNA-directed RNA polymerase, insert domain"/>
    <property type="match status" value="1"/>
</dbReference>
<dbReference type="Gene3D" id="3.30.1360.10">
    <property type="entry name" value="RNA polymerase, RBP11-like subunit"/>
    <property type="match status" value="1"/>
</dbReference>
<dbReference type="HAMAP" id="MF_00059">
    <property type="entry name" value="RNApol_bact_RpoA"/>
    <property type="match status" value="1"/>
</dbReference>
<dbReference type="InterPro" id="IPR011262">
    <property type="entry name" value="DNA-dir_RNA_pol_insert"/>
</dbReference>
<dbReference type="InterPro" id="IPR011263">
    <property type="entry name" value="DNA-dir_RNA_pol_RpoA/D/Rpb3"/>
</dbReference>
<dbReference type="InterPro" id="IPR011773">
    <property type="entry name" value="DNA-dir_RpoA"/>
</dbReference>
<dbReference type="InterPro" id="IPR036603">
    <property type="entry name" value="RBP11-like"/>
</dbReference>
<dbReference type="InterPro" id="IPR011260">
    <property type="entry name" value="RNAP_asu_C"/>
</dbReference>
<dbReference type="InterPro" id="IPR036643">
    <property type="entry name" value="RNApol_insert_sf"/>
</dbReference>
<dbReference type="NCBIfam" id="NF003513">
    <property type="entry name" value="PRK05182.1-2"/>
    <property type="match status" value="1"/>
</dbReference>
<dbReference type="NCBIfam" id="NF003519">
    <property type="entry name" value="PRK05182.2-5"/>
    <property type="match status" value="1"/>
</dbReference>
<dbReference type="NCBIfam" id="TIGR02027">
    <property type="entry name" value="rpoA"/>
    <property type="match status" value="1"/>
</dbReference>
<dbReference type="Pfam" id="PF01000">
    <property type="entry name" value="RNA_pol_A_bac"/>
    <property type="match status" value="1"/>
</dbReference>
<dbReference type="Pfam" id="PF03118">
    <property type="entry name" value="RNA_pol_A_CTD"/>
    <property type="match status" value="1"/>
</dbReference>
<dbReference type="Pfam" id="PF01193">
    <property type="entry name" value="RNA_pol_L"/>
    <property type="match status" value="1"/>
</dbReference>
<dbReference type="SMART" id="SM00662">
    <property type="entry name" value="RPOLD"/>
    <property type="match status" value="1"/>
</dbReference>
<dbReference type="SUPFAM" id="SSF47789">
    <property type="entry name" value="C-terminal domain of RNA polymerase alpha subunit"/>
    <property type="match status" value="1"/>
</dbReference>
<dbReference type="SUPFAM" id="SSF56553">
    <property type="entry name" value="Insert subdomain of RNA polymerase alpha subunit"/>
    <property type="match status" value="1"/>
</dbReference>
<dbReference type="SUPFAM" id="SSF55257">
    <property type="entry name" value="RBP11-like subunits of RNA polymerase"/>
    <property type="match status" value="1"/>
</dbReference>
<evidence type="ECO:0000255" key="1">
    <source>
        <dbReference type="HAMAP-Rule" id="MF_00059"/>
    </source>
</evidence>
<feature type="chain" id="PRO_0000323654" description="DNA-directed RNA polymerase subunit alpha">
    <location>
        <begin position="1"/>
        <end position="329"/>
    </location>
</feature>
<feature type="region of interest" description="Alpha N-terminal domain (alpha-NTD)" evidence="1">
    <location>
        <begin position="1"/>
        <end position="234"/>
    </location>
</feature>
<feature type="region of interest" description="Alpha C-terminal domain (alpha-CTD)" evidence="1">
    <location>
        <begin position="248"/>
        <end position="329"/>
    </location>
</feature>
<proteinExistence type="inferred from homology"/>
<protein>
    <recommendedName>
        <fullName evidence="1">DNA-directed RNA polymerase subunit alpha</fullName>
        <shortName evidence="1">RNAP subunit alpha</shortName>
        <ecNumber evidence="1">2.7.7.6</ecNumber>
    </recommendedName>
    <alternativeName>
        <fullName evidence="1">RNA polymerase subunit alpha</fullName>
    </alternativeName>
    <alternativeName>
        <fullName evidence="1">Transcriptase subunit alpha</fullName>
    </alternativeName>
</protein>
<gene>
    <name evidence="1" type="primary">rpoA</name>
    <name type="ordered locus">Sputcn32_3734</name>
</gene>
<keyword id="KW-0240">DNA-directed RNA polymerase</keyword>
<keyword id="KW-0548">Nucleotidyltransferase</keyword>
<keyword id="KW-0804">Transcription</keyword>
<keyword id="KW-0808">Transferase</keyword>
<comment type="function">
    <text evidence="1">DNA-dependent RNA polymerase catalyzes the transcription of DNA into RNA using the four ribonucleoside triphosphates as substrates.</text>
</comment>
<comment type="catalytic activity">
    <reaction evidence="1">
        <text>RNA(n) + a ribonucleoside 5'-triphosphate = RNA(n+1) + diphosphate</text>
        <dbReference type="Rhea" id="RHEA:21248"/>
        <dbReference type="Rhea" id="RHEA-COMP:14527"/>
        <dbReference type="Rhea" id="RHEA-COMP:17342"/>
        <dbReference type="ChEBI" id="CHEBI:33019"/>
        <dbReference type="ChEBI" id="CHEBI:61557"/>
        <dbReference type="ChEBI" id="CHEBI:140395"/>
        <dbReference type="EC" id="2.7.7.6"/>
    </reaction>
</comment>
<comment type="subunit">
    <text evidence="1">Homodimer. The RNAP catalytic core consists of 2 alpha, 1 beta, 1 beta' and 1 omega subunit. When a sigma factor is associated with the core the holoenzyme is formed, which can initiate transcription.</text>
</comment>
<comment type="domain">
    <text evidence="1">The N-terminal domain is essential for RNAP assembly and basal transcription, whereas the C-terminal domain is involved in interaction with transcriptional regulators and with upstream promoter elements.</text>
</comment>
<comment type="similarity">
    <text evidence="1">Belongs to the RNA polymerase alpha chain family.</text>
</comment>
<accession>A4YBV8</accession>
<sequence length="329" mass="36142">MQGSVTEFLKPRLVDIEQVNSTRAKVTLEPLERGFGHTLGNALRRILLSSMPGCAVTEVEIDGVLHEYSSKEGVQEDILEILLNLKGLAVTIEGKDEAMLTLSKSGAGPVIAADITHDGDVTIVNPDHVICHLTGNNDISMRIRVERGRGYVPASARAQTEDDDRPIGRLLVDASFSPVARIAYNVEAARVEQRTDLDKLVIDMTTNGTIDPEEAIRRSATILAEQLDAFVELRDVTEPELKEEKPEFDPILLRPVDDLELTVRSANCLKAEAIHYIGDLVQRTEVELLKTPNLGKKSLTEIKDVLASRGLSLGMRLENWPPASLADDL</sequence>
<organism>
    <name type="scientific">Shewanella putrefaciens (strain CN-32 / ATCC BAA-453)</name>
    <dbReference type="NCBI Taxonomy" id="319224"/>
    <lineage>
        <taxon>Bacteria</taxon>
        <taxon>Pseudomonadati</taxon>
        <taxon>Pseudomonadota</taxon>
        <taxon>Gammaproteobacteria</taxon>
        <taxon>Alteromonadales</taxon>
        <taxon>Shewanellaceae</taxon>
        <taxon>Shewanella</taxon>
    </lineage>
</organism>